<comment type="function">
    <text evidence="1">Oxidative deamination of D-amino acids.</text>
</comment>
<comment type="catalytic activity">
    <reaction evidence="1">
        <text>a D-alpha-amino acid + A + H2O = a 2-oxocarboxylate + AH2 + NH4(+)</text>
        <dbReference type="Rhea" id="RHEA:18125"/>
        <dbReference type="ChEBI" id="CHEBI:13193"/>
        <dbReference type="ChEBI" id="CHEBI:15377"/>
        <dbReference type="ChEBI" id="CHEBI:17499"/>
        <dbReference type="ChEBI" id="CHEBI:28938"/>
        <dbReference type="ChEBI" id="CHEBI:35179"/>
        <dbReference type="ChEBI" id="CHEBI:59871"/>
    </reaction>
</comment>
<comment type="cofactor">
    <cofactor evidence="1">
        <name>FAD</name>
        <dbReference type="ChEBI" id="CHEBI:57692"/>
    </cofactor>
</comment>
<comment type="pathway">
    <text>Amino-acid degradation; D-alanine degradation; NH(3) and pyruvate from D-alanine: step 1/1.</text>
</comment>
<comment type="similarity">
    <text evidence="1">Belongs to the DadA oxidoreductase family.</text>
</comment>
<accession>Q9PF27</accession>
<keyword id="KW-0274">FAD</keyword>
<keyword id="KW-0285">Flavoprotein</keyword>
<keyword id="KW-0560">Oxidoreductase</keyword>
<gene>
    <name evidence="1" type="primary">dadA</name>
    <name type="ordered locus">XF_0851</name>
</gene>
<protein>
    <recommendedName>
        <fullName evidence="1">D-amino acid dehydrogenase</fullName>
        <ecNumber evidence="1">1.4.99.-</ecNumber>
    </recommendedName>
</protein>
<proteinExistence type="inferred from homology"/>
<dbReference type="EC" id="1.4.99.-" evidence="1"/>
<dbReference type="EMBL" id="AE003849">
    <property type="protein sequence ID" value="AAF83661.1"/>
    <property type="molecule type" value="Genomic_DNA"/>
</dbReference>
<dbReference type="PIR" id="E82753">
    <property type="entry name" value="E82753"/>
</dbReference>
<dbReference type="RefSeq" id="WP_010893371.1">
    <property type="nucleotide sequence ID" value="NC_002488.3"/>
</dbReference>
<dbReference type="SMR" id="Q9PF27"/>
<dbReference type="STRING" id="160492.XF_0851"/>
<dbReference type="KEGG" id="xfa:XF_0851"/>
<dbReference type="eggNOG" id="COG0665">
    <property type="taxonomic scope" value="Bacteria"/>
</dbReference>
<dbReference type="HOGENOM" id="CLU_007884_9_2_6"/>
<dbReference type="UniPathway" id="UPA00043">
    <property type="reaction ID" value="UER00498"/>
</dbReference>
<dbReference type="Proteomes" id="UP000000812">
    <property type="component" value="Chromosome"/>
</dbReference>
<dbReference type="GO" id="GO:0005737">
    <property type="term" value="C:cytoplasm"/>
    <property type="evidence" value="ECO:0007669"/>
    <property type="project" value="TreeGrafter"/>
</dbReference>
<dbReference type="GO" id="GO:0005886">
    <property type="term" value="C:plasma membrane"/>
    <property type="evidence" value="ECO:0007669"/>
    <property type="project" value="TreeGrafter"/>
</dbReference>
<dbReference type="GO" id="GO:0008718">
    <property type="term" value="F:D-amino-acid dehydrogenase activity"/>
    <property type="evidence" value="ECO:0007669"/>
    <property type="project" value="UniProtKB-UniRule"/>
</dbReference>
<dbReference type="GO" id="GO:0055130">
    <property type="term" value="P:D-alanine catabolic process"/>
    <property type="evidence" value="ECO:0007669"/>
    <property type="project" value="UniProtKB-UniPathway"/>
</dbReference>
<dbReference type="FunFam" id="3.50.50.60:FF:000020">
    <property type="entry name" value="D-amino acid dehydrogenase"/>
    <property type="match status" value="1"/>
</dbReference>
<dbReference type="Gene3D" id="3.30.9.10">
    <property type="entry name" value="D-Amino Acid Oxidase, subunit A, domain 2"/>
    <property type="match status" value="1"/>
</dbReference>
<dbReference type="Gene3D" id="3.50.50.60">
    <property type="entry name" value="FAD/NAD(P)-binding domain"/>
    <property type="match status" value="2"/>
</dbReference>
<dbReference type="HAMAP" id="MF_01202">
    <property type="entry name" value="DadA"/>
    <property type="match status" value="1"/>
</dbReference>
<dbReference type="InterPro" id="IPR023080">
    <property type="entry name" value="DadA"/>
</dbReference>
<dbReference type="InterPro" id="IPR006076">
    <property type="entry name" value="FAD-dep_OxRdtase"/>
</dbReference>
<dbReference type="InterPro" id="IPR036188">
    <property type="entry name" value="FAD/NAD-bd_sf"/>
</dbReference>
<dbReference type="NCBIfam" id="NF001933">
    <property type="entry name" value="PRK00711.1"/>
    <property type="match status" value="1"/>
</dbReference>
<dbReference type="PANTHER" id="PTHR13847:SF280">
    <property type="entry name" value="D-AMINO ACID DEHYDROGENASE"/>
    <property type="match status" value="1"/>
</dbReference>
<dbReference type="PANTHER" id="PTHR13847">
    <property type="entry name" value="SARCOSINE DEHYDROGENASE-RELATED"/>
    <property type="match status" value="1"/>
</dbReference>
<dbReference type="Pfam" id="PF01266">
    <property type="entry name" value="DAO"/>
    <property type="match status" value="1"/>
</dbReference>
<dbReference type="SUPFAM" id="SSF54373">
    <property type="entry name" value="FAD-linked reductases, C-terminal domain"/>
    <property type="match status" value="1"/>
</dbReference>
<dbReference type="SUPFAM" id="SSF51905">
    <property type="entry name" value="FAD/NAD(P)-binding domain"/>
    <property type="match status" value="1"/>
</dbReference>
<evidence type="ECO:0000255" key="1">
    <source>
        <dbReference type="HAMAP-Rule" id="MF_01202"/>
    </source>
</evidence>
<name>DADA_XYLFA</name>
<sequence length="435" mass="47539">MRVLILGSGVIGTTSAWYLSKAGCEVVVVDRQSGAGLETSYANGGQLSFGYTSPWAAPGVPLKAVRWLFERHAPLSIRPTTDWNQYVWLARMLRHCSAERYAVNKSRMLRLSEYSREALEALSAETGITFEGRHLGTIQLFRTQQQLDVVVRDIELLTQYGIPYEVLSPSQISKFEPGLADGSVRFPGALRLPHDQTGDCCLFTQRLAALAAKRGVEFRYGCTVQRLEVDGPRVTGAWINGALERADCCVVALGSYSPLLLAPLGLRLPVYPLKGFSLTLPMIDASRAPVSTVLDESYKVAVTRFDERIRVAGMAEVSGYDVSLNPRRRATLEMVVQDVYPGCGDLGRGEFWTGLRPATPDGTPVIGATPYQGLFLNTGHGTLGWTMSSGSGRYLADLICCRPCEISSEGLDMFRYLVSTIPCPQECAPCVPPTP</sequence>
<feature type="chain" id="PRO_0000166157" description="D-amino acid dehydrogenase">
    <location>
        <begin position="1"/>
        <end position="435"/>
    </location>
</feature>
<feature type="binding site" evidence="1">
    <location>
        <begin position="3"/>
        <end position="17"/>
    </location>
    <ligand>
        <name>FAD</name>
        <dbReference type="ChEBI" id="CHEBI:57692"/>
    </ligand>
</feature>
<reference key="1">
    <citation type="journal article" date="2000" name="Nature">
        <title>The genome sequence of the plant pathogen Xylella fastidiosa.</title>
        <authorList>
            <person name="Simpson A.J.G."/>
            <person name="Reinach F.C."/>
            <person name="Arruda P."/>
            <person name="Abreu F.A."/>
            <person name="Acencio M."/>
            <person name="Alvarenga R."/>
            <person name="Alves L.M.C."/>
            <person name="Araya J.E."/>
            <person name="Baia G.S."/>
            <person name="Baptista C.S."/>
            <person name="Barros M.H."/>
            <person name="Bonaccorsi E.D."/>
            <person name="Bordin S."/>
            <person name="Bove J.M."/>
            <person name="Briones M.R.S."/>
            <person name="Bueno M.R.P."/>
            <person name="Camargo A.A."/>
            <person name="Camargo L.E.A."/>
            <person name="Carraro D.M."/>
            <person name="Carrer H."/>
            <person name="Colauto N.B."/>
            <person name="Colombo C."/>
            <person name="Costa F.F."/>
            <person name="Costa M.C.R."/>
            <person name="Costa-Neto C.M."/>
            <person name="Coutinho L.L."/>
            <person name="Cristofani M."/>
            <person name="Dias-Neto E."/>
            <person name="Docena C."/>
            <person name="El-Dorry H."/>
            <person name="Facincani A.P."/>
            <person name="Ferreira A.J.S."/>
            <person name="Ferreira V.C.A."/>
            <person name="Ferro J.A."/>
            <person name="Fraga J.S."/>
            <person name="Franca S.C."/>
            <person name="Franco M.C."/>
            <person name="Frohme M."/>
            <person name="Furlan L.R."/>
            <person name="Garnier M."/>
            <person name="Goldman G.H."/>
            <person name="Goldman M.H.S."/>
            <person name="Gomes S.L."/>
            <person name="Gruber A."/>
            <person name="Ho P.L."/>
            <person name="Hoheisel J.D."/>
            <person name="Junqueira M.L."/>
            <person name="Kemper E.L."/>
            <person name="Kitajima J.P."/>
            <person name="Krieger J.E."/>
            <person name="Kuramae E.E."/>
            <person name="Laigret F."/>
            <person name="Lambais M.R."/>
            <person name="Leite L.C.C."/>
            <person name="Lemos E.G.M."/>
            <person name="Lemos M.V.F."/>
            <person name="Lopes S.A."/>
            <person name="Lopes C.R."/>
            <person name="Machado J.A."/>
            <person name="Machado M.A."/>
            <person name="Madeira A.M.B.N."/>
            <person name="Madeira H.M.F."/>
            <person name="Marino C.L."/>
            <person name="Marques M.V."/>
            <person name="Martins E.A.L."/>
            <person name="Martins E.M.F."/>
            <person name="Matsukuma A.Y."/>
            <person name="Menck C.F.M."/>
            <person name="Miracca E.C."/>
            <person name="Miyaki C.Y."/>
            <person name="Monteiro-Vitorello C.B."/>
            <person name="Moon D.H."/>
            <person name="Nagai M.A."/>
            <person name="Nascimento A.L.T.O."/>
            <person name="Netto L.E.S."/>
            <person name="Nhani A. Jr."/>
            <person name="Nobrega F.G."/>
            <person name="Nunes L.R."/>
            <person name="Oliveira M.A."/>
            <person name="de Oliveira M.C."/>
            <person name="de Oliveira R.C."/>
            <person name="Palmieri D.A."/>
            <person name="Paris A."/>
            <person name="Peixoto B.R."/>
            <person name="Pereira G.A.G."/>
            <person name="Pereira H.A. Jr."/>
            <person name="Pesquero J.B."/>
            <person name="Quaggio R.B."/>
            <person name="Roberto P.G."/>
            <person name="Rodrigues V."/>
            <person name="de Rosa A.J.M."/>
            <person name="de Rosa V.E. Jr."/>
            <person name="de Sa R.G."/>
            <person name="Santelli R.V."/>
            <person name="Sawasaki H.E."/>
            <person name="da Silva A.C.R."/>
            <person name="da Silva A.M."/>
            <person name="da Silva F.R."/>
            <person name="Silva W.A. Jr."/>
            <person name="da Silveira J.F."/>
            <person name="Silvestri M.L.Z."/>
            <person name="Siqueira W.J."/>
            <person name="de Souza A.A."/>
            <person name="de Souza A.P."/>
            <person name="Terenzi M.F."/>
            <person name="Truffi D."/>
            <person name="Tsai S.M."/>
            <person name="Tsuhako M.H."/>
            <person name="Vallada H."/>
            <person name="Van Sluys M.A."/>
            <person name="Verjovski-Almeida S."/>
            <person name="Vettore A.L."/>
            <person name="Zago M.A."/>
            <person name="Zatz M."/>
            <person name="Meidanis J."/>
            <person name="Setubal J.C."/>
        </authorList>
    </citation>
    <scope>NUCLEOTIDE SEQUENCE [LARGE SCALE GENOMIC DNA]</scope>
    <source>
        <strain>9a5c</strain>
    </source>
</reference>
<organism>
    <name type="scientific">Xylella fastidiosa (strain 9a5c)</name>
    <dbReference type="NCBI Taxonomy" id="160492"/>
    <lineage>
        <taxon>Bacteria</taxon>
        <taxon>Pseudomonadati</taxon>
        <taxon>Pseudomonadota</taxon>
        <taxon>Gammaproteobacteria</taxon>
        <taxon>Lysobacterales</taxon>
        <taxon>Lysobacteraceae</taxon>
        <taxon>Xylella</taxon>
    </lineage>
</organism>